<name>RS5_BARHE</name>
<keyword id="KW-0687">Ribonucleoprotein</keyword>
<keyword id="KW-0689">Ribosomal protein</keyword>
<keyword id="KW-0694">RNA-binding</keyword>
<keyword id="KW-0699">rRNA-binding</keyword>
<sequence length="182" mass="19991">MAQKERSERDERESEFVDRLVHINRVAKVVKGGRRFGFAALVVVGDQKGRVGFGHGKAREVPEAVRKATESAKRGMIYVPLRSGRTLHHDLEGHHGAGRVLLRSASAGTGIIAGGPMRAIFETLGMQDVVAKSLGSSNPYNMVRATFDALKRQMHPRDIAAQRGIKYSTLQARRQHLVDAEG</sequence>
<proteinExistence type="inferred from homology"/>
<comment type="function">
    <text evidence="1">With S4 and S12 plays an important role in translational accuracy.</text>
</comment>
<comment type="function">
    <text evidence="1">Located at the back of the 30S subunit body where it stabilizes the conformation of the head with respect to the body.</text>
</comment>
<comment type="subunit">
    <text evidence="1">Part of the 30S ribosomal subunit. Contacts proteins S4 and S8.</text>
</comment>
<comment type="domain">
    <text>The N-terminal domain interacts with the head of the 30S subunit; the C-terminal domain interacts with the body and contacts protein S4. The interaction surface between S4 and S5 is involved in control of translational fidelity.</text>
</comment>
<comment type="similarity">
    <text evidence="1">Belongs to the universal ribosomal protein uS5 family.</text>
</comment>
<gene>
    <name evidence="1" type="primary">rpsE</name>
    <name type="ordered locus">BH10340</name>
</gene>
<organism>
    <name type="scientific">Bartonella henselae (strain ATCC 49882 / DSM 28221 / CCUG 30454 / Houston 1)</name>
    <name type="common">Rochalimaea henselae</name>
    <dbReference type="NCBI Taxonomy" id="283166"/>
    <lineage>
        <taxon>Bacteria</taxon>
        <taxon>Pseudomonadati</taxon>
        <taxon>Pseudomonadota</taxon>
        <taxon>Alphaproteobacteria</taxon>
        <taxon>Hyphomicrobiales</taxon>
        <taxon>Bartonellaceae</taxon>
        <taxon>Bartonella</taxon>
    </lineage>
</organism>
<reference key="1">
    <citation type="journal article" date="2004" name="Proc. Natl. Acad. Sci. U.S.A.">
        <title>The louse-borne human pathogen Bartonella quintana is a genomic derivative of the zoonotic agent Bartonella henselae.</title>
        <authorList>
            <person name="Alsmark U.C.M."/>
            <person name="Frank A.C."/>
            <person name="Karlberg E.O."/>
            <person name="Legault B.-A."/>
            <person name="Ardell D.H."/>
            <person name="Canbaeck B."/>
            <person name="Eriksson A.-S."/>
            <person name="Naeslund A.K."/>
            <person name="Handley S.A."/>
            <person name="Huvet M."/>
            <person name="La Scola B."/>
            <person name="Holmberg M."/>
            <person name="Andersson S.G.E."/>
        </authorList>
    </citation>
    <scope>NUCLEOTIDE SEQUENCE [LARGE SCALE GENOMIC DNA]</scope>
    <source>
        <strain>ATCC 49882 / DSM 28221 / CCUG 30454 / Houston 1</strain>
    </source>
</reference>
<evidence type="ECO:0000255" key="1">
    <source>
        <dbReference type="HAMAP-Rule" id="MF_01307"/>
    </source>
</evidence>
<evidence type="ECO:0000305" key="2"/>
<accession>Q6G2Y2</accession>
<feature type="chain" id="PRO_0000131472" description="Small ribosomal subunit protein uS5">
    <location>
        <begin position="1"/>
        <end position="182"/>
    </location>
</feature>
<feature type="domain" description="S5 DRBM" evidence="1">
    <location>
        <begin position="16"/>
        <end position="79"/>
    </location>
</feature>
<dbReference type="EMBL" id="BX897699">
    <property type="protein sequence ID" value="CAF27825.1"/>
    <property type="molecule type" value="Genomic_DNA"/>
</dbReference>
<dbReference type="RefSeq" id="WP_011180897.1">
    <property type="nucleotide sequence ID" value="NZ_LRIJ02000001.1"/>
</dbReference>
<dbReference type="SMR" id="Q6G2Y2"/>
<dbReference type="PaxDb" id="283166-BH10340"/>
<dbReference type="EnsemblBacteria" id="CAF27825">
    <property type="protein sequence ID" value="CAF27825"/>
    <property type="gene ID" value="BH10340"/>
</dbReference>
<dbReference type="GeneID" id="92985280"/>
<dbReference type="KEGG" id="bhe:BH10340"/>
<dbReference type="eggNOG" id="COG0098">
    <property type="taxonomic scope" value="Bacteria"/>
</dbReference>
<dbReference type="OrthoDB" id="9809045at2"/>
<dbReference type="Proteomes" id="UP000000421">
    <property type="component" value="Chromosome"/>
</dbReference>
<dbReference type="GO" id="GO:0015935">
    <property type="term" value="C:small ribosomal subunit"/>
    <property type="evidence" value="ECO:0007669"/>
    <property type="project" value="InterPro"/>
</dbReference>
<dbReference type="GO" id="GO:0019843">
    <property type="term" value="F:rRNA binding"/>
    <property type="evidence" value="ECO:0007669"/>
    <property type="project" value="UniProtKB-UniRule"/>
</dbReference>
<dbReference type="GO" id="GO:0003735">
    <property type="term" value="F:structural constituent of ribosome"/>
    <property type="evidence" value="ECO:0007669"/>
    <property type="project" value="InterPro"/>
</dbReference>
<dbReference type="GO" id="GO:0006412">
    <property type="term" value="P:translation"/>
    <property type="evidence" value="ECO:0007669"/>
    <property type="project" value="UniProtKB-UniRule"/>
</dbReference>
<dbReference type="FunFam" id="3.30.160.20:FF:000001">
    <property type="entry name" value="30S ribosomal protein S5"/>
    <property type="match status" value="1"/>
</dbReference>
<dbReference type="FunFam" id="3.30.230.10:FF:000002">
    <property type="entry name" value="30S ribosomal protein S5"/>
    <property type="match status" value="1"/>
</dbReference>
<dbReference type="Gene3D" id="3.30.160.20">
    <property type="match status" value="1"/>
</dbReference>
<dbReference type="Gene3D" id="3.30.230.10">
    <property type="match status" value="1"/>
</dbReference>
<dbReference type="HAMAP" id="MF_01307_B">
    <property type="entry name" value="Ribosomal_uS5_B"/>
    <property type="match status" value="1"/>
</dbReference>
<dbReference type="InterPro" id="IPR020568">
    <property type="entry name" value="Ribosomal_Su5_D2-typ_SF"/>
</dbReference>
<dbReference type="InterPro" id="IPR000851">
    <property type="entry name" value="Ribosomal_uS5"/>
</dbReference>
<dbReference type="InterPro" id="IPR005712">
    <property type="entry name" value="Ribosomal_uS5_bac-type"/>
</dbReference>
<dbReference type="InterPro" id="IPR005324">
    <property type="entry name" value="Ribosomal_uS5_C"/>
</dbReference>
<dbReference type="InterPro" id="IPR013810">
    <property type="entry name" value="Ribosomal_uS5_N"/>
</dbReference>
<dbReference type="InterPro" id="IPR018192">
    <property type="entry name" value="Ribosomal_uS5_N_CS"/>
</dbReference>
<dbReference type="InterPro" id="IPR014721">
    <property type="entry name" value="Ribsml_uS5_D2-typ_fold_subgr"/>
</dbReference>
<dbReference type="NCBIfam" id="TIGR01021">
    <property type="entry name" value="rpsE_bact"/>
    <property type="match status" value="1"/>
</dbReference>
<dbReference type="PANTHER" id="PTHR48277">
    <property type="entry name" value="MITOCHONDRIAL RIBOSOMAL PROTEIN S5"/>
    <property type="match status" value="1"/>
</dbReference>
<dbReference type="PANTHER" id="PTHR48277:SF1">
    <property type="entry name" value="MITOCHONDRIAL RIBOSOMAL PROTEIN S5"/>
    <property type="match status" value="1"/>
</dbReference>
<dbReference type="Pfam" id="PF00333">
    <property type="entry name" value="Ribosomal_S5"/>
    <property type="match status" value="1"/>
</dbReference>
<dbReference type="Pfam" id="PF03719">
    <property type="entry name" value="Ribosomal_S5_C"/>
    <property type="match status" value="1"/>
</dbReference>
<dbReference type="SUPFAM" id="SSF54768">
    <property type="entry name" value="dsRNA-binding domain-like"/>
    <property type="match status" value="1"/>
</dbReference>
<dbReference type="SUPFAM" id="SSF54211">
    <property type="entry name" value="Ribosomal protein S5 domain 2-like"/>
    <property type="match status" value="1"/>
</dbReference>
<dbReference type="PROSITE" id="PS00585">
    <property type="entry name" value="RIBOSOMAL_S5"/>
    <property type="match status" value="1"/>
</dbReference>
<dbReference type="PROSITE" id="PS50881">
    <property type="entry name" value="S5_DSRBD"/>
    <property type="match status" value="1"/>
</dbReference>
<protein>
    <recommendedName>
        <fullName evidence="1">Small ribosomal subunit protein uS5</fullName>
    </recommendedName>
    <alternativeName>
        <fullName evidence="2">30S ribosomal protein S5</fullName>
    </alternativeName>
</protein>